<feature type="chain" id="PRO_1000095846" description="Indole-3-glycerol phosphate synthase">
    <location>
        <begin position="1"/>
        <end position="268"/>
    </location>
</feature>
<dbReference type="EC" id="4.1.1.48" evidence="1"/>
<dbReference type="EMBL" id="CP000521">
    <property type="protein sequence ID" value="ABO12779.2"/>
    <property type="molecule type" value="Genomic_DNA"/>
</dbReference>
<dbReference type="RefSeq" id="WP_000608308.1">
    <property type="nucleotide sequence ID" value="NZ_CP053098.1"/>
</dbReference>
<dbReference type="SMR" id="A3M785"/>
<dbReference type="KEGG" id="acb:A1S_2360"/>
<dbReference type="HOGENOM" id="CLU_034247_2_0_6"/>
<dbReference type="UniPathway" id="UPA00035">
    <property type="reaction ID" value="UER00043"/>
</dbReference>
<dbReference type="GO" id="GO:0004425">
    <property type="term" value="F:indole-3-glycerol-phosphate synthase activity"/>
    <property type="evidence" value="ECO:0007669"/>
    <property type="project" value="UniProtKB-UniRule"/>
</dbReference>
<dbReference type="GO" id="GO:0004640">
    <property type="term" value="F:phosphoribosylanthranilate isomerase activity"/>
    <property type="evidence" value="ECO:0007669"/>
    <property type="project" value="TreeGrafter"/>
</dbReference>
<dbReference type="GO" id="GO:0000162">
    <property type="term" value="P:L-tryptophan biosynthetic process"/>
    <property type="evidence" value="ECO:0007669"/>
    <property type="project" value="UniProtKB-UniRule"/>
</dbReference>
<dbReference type="CDD" id="cd00331">
    <property type="entry name" value="IGPS"/>
    <property type="match status" value="1"/>
</dbReference>
<dbReference type="FunFam" id="3.20.20.70:FF:000024">
    <property type="entry name" value="Indole-3-glycerol phosphate synthase"/>
    <property type="match status" value="1"/>
</dbReference>
<dbReference type="Gene3D" id="3.20.20.70">
    <property type="entry name" value="Aldolase class I"/>
    <property type="match status" value="1"/>
</dbReference>
<dbReference type="HAMAP" id="MF_00134_B">
    <property type="entry name" value="IGPS_B"/>
    <property type="match status" value="1"/>
</dbReference>
<dbReference type="InterPro" id="IPR013785">
    <property type="entry name" value="Aldolase_TIM"/>
</dbReference>
<dbReference type="InterPro" id="IPR045186">
    <property type="entry name" value="Indole-3-glycerol_P_synth"/>
</dbReference>
<dbReference type="InterPro" id="IPR013798">
    <property type="entry name" value="Indole-3-glycerol_P_synth_dom"/>
</dbReference>
<dbReference type="InterPro" id="IPR001468">
    <property type="entry name" value="Indole-3-GlycerolPSynthase_CS"/>
</dbReference>
<dbReference type="InterPro" id="IPR011060">
    <property type="entry name" value="RibuloseP-bd_barrel"/>
</dbReference>
<dbReference type="NCBIfam" id="NF001373">
    <property type="entry name" value="PRK00278.1-6"/>
    <property type="match status" value="1"/>
</dbReference>
<dbReference type="NCBIfam" id="NF001377">
    <property type="entry name" value="PRK00278.2-4"/>
    <property type="match status" value="1"/>
</dbReference>
<dbReference type="PANTHER" id="PTHR22854:SF2">
    <property type="entry name" value="INDOLE-3-GLYCEROL-PHOSPHATE SYNTHASE"/>
    <property type="match status" value="1"/>
</dbReference>
<dbReference type="PANTHER" id="PTHR22854">
    <property type="entry name" value="TRYPTOPHAN BIOSYNTHESIS PROTEIN"/>
    <property type="match status" value="1"/>
</dbReference>
<dbReference type="Pfam" id="PF00218">
    <property type="entry name" value="IGPS"/>
    <property type="match status" value="1"/>
</dbReference>
<dbReference type="SUPFAM" id="SSF51366">
    <property type="entry name" value="Ribulose-phoshate binding barrel"/>
    <property type="match status" value="1"/>
</dbReference>
<dbReference type="PROSITE" id="PS00614">
    <property type="entry name" value="IGPS"/>
    <property type="match status" value="1"/>
</dbReference>
<protein>
    <recommendedName>
        <fullName evidence="1">Indole-3-glycerol phosphate synthase</fullName>
        <shortName evidence="1">IGPS</shortName>
        <ecNumber evidence="1">4.1.1.48</ecNumber>
    </recommendedName>
</protein>
<evidence type="ECO:0000255" key="1">
    <source>
        <dbReference type="HAMAP-Rule" id="MF_00134"/>
    </source>
</evidence>
<proteinExistence type="inferred from homology"/>
<gene>
    <name evidence="1" type="primary">trpC</name>
    <name type="ordered locus">A1S_2360</name>
</gene>
<reference key="1">
    <citation type="journal article" date="2007" name="Genes Dev.">
        <title>New insights into Acinetobacter baumannii pathogenesis revealed by high-density pyrosequencing and transposon mutagenesis.</title>
        <authorList>
            <person name="Smith M.G."/>
            <person name="Gianoulis T.A."/>
            <person name="Pukatzki S."/>
            <person name="Mekalanos J.J."/>
            <person name="Ornston L.N."/>
            <person name="Gerstein M."/>
            <person name="Snyder M."/>
        </authorList>
    </citation>
    <scope>NUCLEOTIDE SEQUENCE [LARGE SCALE GENOMIC DNA]</scope>
    <source>
        <strain>ATCC 17978 / DSM 105126 / CIP 53.77 / LMG 1025 / NCDC KC755 / 5377</strain>
    </source>
</reference>
<name>TRPC_ACIBT</name>
<sequence length="268" mass="29911">MINIQNTILGKIVDRKHEELAARLKQRNLQDVEELAKAATPVRGFANALQHKRPGVIAEIKKASPSKGIIRADFNPAEIAQQYEQAGAACLSVLTDVDFFQGADENIAIARNHCALPALRKDFLVDPYNVVEARALHADCILLIVACLSDQQLEEMSKTAFEHQLDVLVEVHDEEELERALKLSEQCLLGVNNRNLKTFDVDLNTTIRLKKLLPASRLLITESGIATPDDVRMMQEHDIHSFLVGESFMKQPRPDQAFTALFGQPQTV</sequence>
<comment type="catalytic activity">
    <reaction evidence="1">
        <text>1-(2-carboxyphenylamino)-1-deoxy-D-ribulose 5-phosphate + H(+) = (1S,2R)-1-C-(indol-3-yl)glycerol 3-phosphate + CO2 + H2O</text>
        <dbReference type="Rhea" id="RHEA:23476"/>
        <dbReference type="ChEBI" id="CHEBI:15377"/>
        <dbReference type="ChEBI" id="CHEBI:15378"/>
        <dbReference type="ChEBI" id="CHEBI:16526"/>
        <dbReference type="ChEBI" id="CHEBI:58613"/>
        <dbReference type="ChEBI" id="CHEBI:58866"/>
        <dbReference type="EC" id="4.1.1.48"/>
    </reaction>
</comment>
<comment type="pathway">
    <text evidence="1">Amino-acid biosynthesis; L-tryptophan biosynthesis; L-tryptophan from chorismate: step 4/5.</text>
</comment>
<comment type="similarity">
    <text evidence="1">Belongs to the TrpC family.</text>
</comment>
<keyword id="KW-0028">Amino-acid biosynthesis</keyword>
<keyword id="KW-0057">Aromatic amino acid biosynthesis</keyword>
<keyword id="KW-0210">Decarboxylase</keyword>
<keyword id="KW-0456">Lyase</keyword>
<keyword id="KW-0822">Tryptophan biosynthesis</keyword>
<accession>A3M785</accession>
<organism>
    <name type="scientific">Acinetobacter baumannii (strain ATCC 17978 / DSM 105126 / CIP 53.77 / LMG 1025 / NCDC KC755 / 5377)</name>
    <dbReference type="NCBI Taxonomy" id="400667"/>
    <lineage>
        <taxon>Bacteria</taxon>
        <taxon>Pseudomonadati</taxon>
        <taxon>Pseudomonadota</taxon>
        <taxon>Gammaproteobacteria</taxon>
        <taxon>Moraxellales</taxon>
        <taxon>Moraxellaceae</taxon>
        <taxon>Acinetobacter</taxon>
        <taxon>Acinetobacter calcoaceticus/baumannii complex</taxon>
    </lineage>
</organism>